<organism>
    <name type="scientific">Clostridium perfringens (strain SM101 / Type A)</name>
    <dbReference type="NCBI Taxonomy" id="289380"/>
    <lineage>
        <taxon>Bacteria</taxon>
        <taxon>Bacillati</taxon>
        <taxon>Bacillota</taxon>
        <taxon>Clostridia</taxon>
        <taxon>Eubacteriales</taxon>
        <taxon>Clostridiaceae</taxon>
        <taxon>Clostridium</taxon>
    </lineage>
</organism>
<accession>Q0SSN2</accession>
<comment type="function">
    <text evidence="1">Catalyzes the formation of the alpha-1,6-glucosidic linkages in glycogen by scission of a 1,4-alpha-linked oligosaccharide from growing alpha-1,4-glucan chains and the subsequent attachment of the oligosaccharide to the alpha-1,6 position.</text>
</comment>
<comment type="catalytic activity">
    <reaction evidence="1">
        <text>Transfers a segment of a (1-&gt;4)-alpha-D-glucan chain to a primary hydroxy group in a similar glucan chain.</text>
        <dbReference type="EC" id="2.4.1.18"/>
    </reaction>
</comment>
<comment type="pathway">
    <text evidence="1">Glycan biosynthesis; glycogen biosynthesis.</text>
</comment>
<comment type="subunit">
    <text evidence="1">Monomer.</text>
</comment>
<comment type="similarity">
    <text evidence="1">Belongs to the glycosyl hydrolase 13 family. GlgB subfamily.</text>
</comment>
<protein>
    <recommendedName>
        <fullName evidence="1">1,4-alpha-glucan branching enzyme GlgB 2</fullName>
        <ecNumber evidence="1">2.4.1.18</ecNumber>
    </recommendedName>
    <alternativeName>
        <fullName evidence="1">1,4-alpha-D-glucan:1,4-alpha-D-glucan 6-glucosyl-transferase 2</fullName>
    </alternativeName>
    <alternativeName>
        <fullName evidence="1">Alpha-(1-&gt;4)-glucan branching enzyme 2</fullName>
    </alternativeName>
    <alternativeName>
        <fullName evidence="1">Glycogen branching enzyme 2</fullName>
        <shortName evidence="1">BE 2</shortName>
    </alternativeName>
</protein>
<proteinExistence type="inferred from homology"/>
<dbReference type="EC" id="2.4.1.18" evidence="1"/>
<dbReference type="EMBL" id="CP000312">
    <property type="protein sequence ID" value="ABG87715.1"/>
    <property type="molecule type" value="Genomic_DNA"/>
</dbReference>
<dbReference type="RefSeq" id="WP_011592507.1">
    <property type="nucleotide sequence ID" value="NC_008262.1"/>
</dbReference>
<dbReference type="SMR" id="Q0SSN2"/>
<dbReference type="CAZy" id="CBM48">
    <property type="family name" value="Carbohydrate-Binding Module Family 48"/>
</dbReference>
<dbReference type="CAZy" id="GH13">
    <property type="family name" value="Glycoside Hydrolase Family 13"/>
</dbReference>
<dbReference type="KEGG" id="cpr:CPR_1559"/>
<dbReference type="UniPathway" id="UPA00164"/>
<dbReference type="Proteomes" id="UP000001824">
    <property type="component" value="Chromosome"/>
</dbReference>
<dbReference type="GO" id="GO:0005829">
    <property type="term" value="C:cytosol"/>
    <property type="evidence" value="ECO:0007669"/>
    <property type="project" value="TreeGrafter"/>
</dbReference>
<dbReference type="GO" id="GO:0003844">
    <property type="term" value="F:1,4-alpha-glucan branching enzyme activity"/>
    <property type="evidence" value="ECO:0007669"/>
    <property type="project" value="UniProtKB-UniRule"/>
</dbReference>
<dbReference type="GO" id="GO:0043169">
    <property type="term" value="F:cation binding"/>
    <property type="evidence" value="ECO:0007669"/>
    <property type="project" value="InterPro"/>
</dbReference>
<dbReference type="GO" id="GO:0004553">
    <property type="term" value="F:hydrolase activity, hydrolyzing O-glycosyl compounds"/>
    <property type="evidence" value="ECO:0007669"/>
    <property type="project" value="InterPro"/>
</dbReference>
<dbReference type="GO" id="GO:0005978">
    <property type="term" value="P:glycogen biosynthetic process"/>
    <property type="evidence" value="ECO:0007669"/>
    <property type="project" value="UniProtKB-UniRule"/>
</dbReference>
<dbReference type="CDD" id="cd11322">
    <property type="entry name" value="AmyAc_Glg_BE"/>
    <property type="match status" value="1"/>
</dbReference>
<dbReference type="CDD" id="cd02855">
    <property type="entry name" value="E_set_GBE_prok_N"/>
    <property type="match status" value="1"/>
</dbReference>
<dbReference type="FunFam" id="2.60.40.1180:FF:000002">
    <property type="entry name" value="1,4-alpha-glucan branching enzyme GlgB"/>
    <property type="match status" value="1"/>
</dbReference>
<dbReference type="FunFam" id="3.20.20.80:FF:000003">
    <property type="entry name" value="1,4-alpha-glucan branching enzyme GlgB"/>
    <property type="match status" value="1"/>
</dbReference>
<dbReference type="Gene3D" id="3.20.20.80">
    <property type="entry name" value="Glycosidases"/>
    <property type="match status" value="1"/>
</dbReference>
<dbReference type="Gene3D" id="2.60.40.1180">
    <property type="entry name" value="Golgi alpha-mannosidase II"/>
    <property type="match status" value="1"/>
</dbReference>
<dbReference type="Gene3D" id="2.60.40.10">
    <property type="entry name" value="Immunoglobulins"/>
    <property type="match status" value="1"/>
</dbReference>
<dbReference type="HAMAP" id="MF_00685">
    <property type="entry name" value="GlgB"/>
    <property type="match status" value="1"/>
</dbReference>
<dbReference type="InterPro" id="IPR006048">
    <property type="entry name" value="A-amylase/branching_C"/>
</dbReference>
<dbReference type="InterPro" id="IPR037439">
    <property type="entry name" value="Branching_enzy"/>
</dbReference>
<dbReference type="InterPro" id="IPR006407">
    <property type="entry name" value="GlgB"/>
</dbReference>
<dbReference type="InterPro" id="IPR044143">
    <property type="entry name" value="GlgB_N_E_set_prok"/>
</dbReference>
<dbReference type="InterPro" id="IPR006047">
    <property type="entry name" value="Glyco_hydro_13_cat_dom"/>
</dbReference>
<dbReference type="InterPro" id="IPR004193">
    <property type="entry name" value="Glyco_hydro_13_N"/>
</dbReference>
<dbReference type="InterPro" id="IPR013780">
    <property type="entry name" value="Glyco_hydro_b"/>
</dbReference>
<dbReference type="InterPro" id="IPR017853">
    <property type="entry name" value="Glycoside_hydrolase_SF"/>
</dbReference>
<dbReference type="InterPro" id="IPR013783">
    <property type="entry name" value="Ig-like_fold"/>
</dbReference>
<dbReference type="InterPro" id="IPR014756">
    <property type="entry name" value="Ig_E-set"/>
</dbReference>
<dbReference type="NCBIfam" id="TIGR01515">
    <property type="entry name" value="branching_enzym"/>
    <property type="match status" value="1"/>
</dbReference>
<dbReference type="NCBIfam" id="NF003811">
    <property type="entry name" value="PRK05402.1"/>
    <property type="match status" value="1"/>
</dbReference>
<dbReference type="NCBIfam" id="NF008967">
    <property type="entry name" value="PRK12313.1"/>
    <property type="match status" value="1"/>
</dbReference>
<dbReference type="PANTHER" id="PTHR43651">
    <property type="entry name" value="1,4-ALPHA-GLUCAN-BRANCHING ENZYME"/>
    <property type="match status" value="1"/>
</dbReference>
<dbReference type="PANTHER" id="PTHR43651:SF3">
    <property type="entry name" value="1,4-ALPHA-GLUCAN-BRANCHING ENZYME"/>
    <property type="match status" value="1"/>
</dbReference>
<dbReference type="Pfam" id="PF00128">
    <property type="entry name" value="Alpha-amylase"/>
    <property type="match status" value="2"/>
</dbReference>
<dbReference type="Pfam" id="PF02806">
    <property type="entry name" value="Alpha-amylase_C"/>
    <property type="match status" value="1"/>
</dbReference>
<dbReference type="Pfam" id="PF02922">
    <property type="entry name" value="CBM_48"/>
    <property type="match status" value="1"/>
</dbReference>
<dbReference type="PIRSF" id="PIRSF000463">
    <property type="entry name" value="GlgB"/>
    <property type="match status" value="1"/>
</dbReference>
<dbReference type="SMART" id="SM00642">
    <property type="entry name" value="Aamy"/>
    <property type="match status" value="1"/>
</dbReference>
<dbReference type="SUPFAM" id="SSF51445">
    <property type="entry name" value="(Trans)glycosidases"/>
    <property type="match status" value="1"/>
</dbReference>
<dbReference type="SUPFAM" id="SSF81296">
    <property type="entry name" value="E set domains"/>
    <property type="match status" value="1"/>
</dbReference>
<dbReference type="SUPFAM" id="SSF51011">
    <property type="entry name" value="Glycosyl hydrolase domain"/>
    <property type="match status" value="1"/>
</dbReference>
<sequence>MRNYKELKHEKNGNVTEKIGENKGKSKKMSKDESLLSFDLFLEGKEHSAYKFMGAHFITENRKRGVRFTTWSPRASKIYIIGDFNNWELKEEYSMKKINERGIWSLFIPKLEEGIKYKFAVENECGNNTVYKSDPYAFKSELRPNTASVLTKIKSFRWGDKRWLNKREKEGLDNKPMNIYELHLGSWKRKDGEFMTYEEISEVLVEYIKEMGYTHVEFMPVNEHPLDASWGYQGVGYYSVTSRYGDLNGLKTLINKLHKNNIGVLLDWVPSHFCKDEHGLFMFDGSPTYEYEVWWKANNEGWGTCNFDLGRPEVKSFLFSNAMYWINEFHVDGLRVDAVSNMLYLDYGREYGEWEPNIYGENGNLEAIAFLKELNTIIKKEGKGAITVAEESTSWEGITKSVEEGGLGFDYKWNMGWMNDTLSYIELDPIYRKYHHNKMNFSMMYNYSEKFILPISHDEVVHGKKSLINKMWGDDWKKYAGLRLYASFMMGHPGKKLMFMGCEFGQFVEWREWEELQWSVIEEFDIHRKTKEYFKALNKFYLENSSLWSLDYEEEGFKWMDADNSEESVLSFIRIGKNKKEKLIFICNFTPEVYYDFKVGVPELGEYVEVFNSDSLEFGGVGNIMGDSILKATEESFKDFDYSISVKVPPLGTLVLKVK</sequence>
<evidence type="ECO:0000255" key="1">
    <source>
        <dbReference type="HAMAP-Rule" id="MF_00685"/>
    </source>
</evidence>
<evidence type="ECO:0000256" key="2">
    <source>
        <dbReference type="SAM" id="MobiDB-lite"/>
    </source>
</evidence>
<keyword id="KW-0119">Carbohydrate metabolism</keyword>
<keyword id="KW-0320">Glycogen biosynthesis</keyword>
<keyword id="KW-0321">Glycogen metabolism</keyword>
<keyword id="KW-0328">Glycosyltransferase</keyword>
<keyword id="KW-0808">Transferase</keyword>
<reference key="1">
    <citation type="journal article" date="2006" name="Genome Res.">
        <title>Skewed genomic variability in strains of the toxigenic bacterial pathogen, Clostridium perfringens.</title>
        <authorList>
            <person name="Myers G.S.A."/>
            <person name="Rasko D.A."/>
            <person name="Cheung J.K."/>
            <person name="Ravel J."/>
            <person name="Seshadri R."/>
            <person name="DeBoy R.T."/>
            <person name="Ren Q."/>
            <person name="Varga J."/>
            <person name="Awad M.M."/>
            <person name="Brinkac L.M."/>
            <person name="Daugherty S.C."/>
            <person name="Haft D.H."/>
            <person name="Dodson R.J."/>
            <person name="Madupu R."/>
            <person name="Nelson W.C."/>
            <person name="Rosovitz M.J."/>
            <person name="Sullivan S.A."/>
            <person name="Khouri H."/>
            <person name="Dimitrov G.I."/>
            <person name="Watkins K.L."/>
            <person name="Mulligan S."/>
            <person name="Benton J."/>
            <person name="Radune D."/>
            <person name="Fisher D.J."/>
            <person name="Atkins H.S."/>
            <person name="Hiscox T."/>
            <person name="Jost B.H."/>
            <person name="Billington S.J."/>
            <person name="Songer J.G."/>
            <person name="McClane B.A."/>
            <person name="Titball R.W."/>
            <person name="Rood J.I."/>
            <person name="Melville S.B."/>
            <person name="Paulsen I.T."/>
        </authorList>
    </citation>
    <scope>NUCLEOTIDE SEQUENCE [LARGE SCALE GENOMIC DNA]</scope>
    <source>
        <strain>SM101 / Type A</strain>
    </source>
</reference>
<name>GLGB2_CLOPS</name>
<feature type="chain" id="PRO_0000260647" description="1,4-alpha-glucan branching enzyme GlgB 2">
    <location>
        <begin position="1"/>
        <end position="659"/>
    </location>
</feature>
<feature type="region of interest" description="Disordered" evidence="2">
    <location>
        <begin position="1"/>
        <end position="26"/>
    </location>
</feature>
<feature type="active site" description="Nucleophile" evidence="1">
    <location>
        <position position="337"/>
    </location>
</feature>
<feature type="active site" description="Proton donor" evidence="1">
    <location>
        <position position="390"/>
    </location>
</feature>
<gene>
    <name evidence="1" type="primary">glgB2</name>
    <name type="ordered locus">CPR_1559</name>
</gene>